<sequence>MTLKELVVGFGTQVRSLWMIGLHAFHKRETLMYPEEPVYLPPRYRGRIVLTRDPDGEERCVACNLCAVACPVGCISLQKAEQKDGRWYPEFFRINFSRCIFCGLCEEACPTTAIQLTPDFEMGEFKRQDLVYEKEDLLISGPGKYPEYNFYRMAGMAIDGKQKGEAENEAKPIDVKGLMP</sequence>
<accession>Q669A7</accession>
<feature type="chain" id="PRO_0000250958" description="NADH-quinone oxidoreductase subunit I">
    <location>
        <begin position="1"/>
        <end position="180"/>
    </location>
</feature>
<feature type="domain" description="4Fe-4S ferredoxin-type 1" evidence="1">
    <location>
        <begin position="50"/>
        <end position="80"/>
    </location>
</feature>
<feature type="domain" description="4Fe-4S ferredoxin-type 2" evidence="1">
    <location>
        <begin position="90"/>
        <end position="119"/>
    </location>
</feature>
<feature type="binding site" evidence="1">
    <location>
        <position position="60"/>
    </location>
    <ligand>
        <name>[4Fe-4S] cluster</name>
        <dbReference type="ChEBI" id="CHEBI:49883"/>
        <label>1</label>
    </ligand>
</feature>
<feature type="binding site" evidence="1">
    <location>
        <position position="63"/>
    </location>
    <ligand>
        <name>[4Fe-4S] cluster</name>
        <dbReference type="ChEBI" id="CHEBI:49883"/>
        <label>1</label>
    </ligand>
</feature>
<feature type="binding site" evidence="1">
    <location>
        <position position="66"/>
    </location>
    <ligand>
        <name>[4Fe-4S] cluster</name>
        <dbReference type="ChEBI" id="CHEBI:49883"/>
        <label>1</label>
    </ligand>
</feature>
<feature type="binding site" evidence="1">
    <location>
        <position position="70"/>
    </location>
    <ligand>
        <name>[4Fe-4S] cluster</name>
        <dbReference type="ChEBI" id="CHEBI:49883"/>
        <label>2</label>
    </ligand>
</feature>
<feature type="binding site" evidence="1">
    <location>
        <position position="99"/>
    </location>
    <ligand>
        <name>[4Fe-4S] cluster</name>
        <dbReference type="ChEBI" id="CHEBI:49883"/>
        <label>2</label>
    </ligand>
</feature>
<feature type="binding site" evidence="1">
    <location>
        <position position="102"/>
    </location>
    <ligand>
        <name>[4Fe-4S] cluster</name>
        <dbReference type="ChEBI" id="CHEBI:49883"/>
        <label>2</label>
    </ligand>
</feature>
<feature type="binding site" evidence="1">
    <location>
        <position position="105"/>
    </location>
    <ligand>
        <name>[4Fe-4S] cluster</name>
        <dbReference type="ChEBI" id="CHEBI:49883"/>
        <label>2</label>
    </ligand>
</feature>
<feature type="binding site" evidence="1">
    <location>
        <position position="109"/>
    </location>
    <ligand>
        <name>[4Fe-4S] cluster</name>
        <dbReference type="ChEBI" id="CHEBI:49883"/>
        <label>1</label>
    </ligand>
</feature>
<protein>
    <recommendedName>
        <fullName evidence="1">NADH-quinone oxidoreductase subunit I</fullName>
        <ecNumber evidence="1">7.1.1.-</ecNumber>
    </recommendedName>
    <alternativeName>
        <fullName evidence="1">NADH dehydrogenase I subunit I</fullName>
    </alternativeName>
    <alternativeName>
        <fullName evidence="1">NDH-1 subunit I</fullName>
    </alternativeName>
</protein>
<evidence type="ECO:0000255" key="1">
    <source>
        <dbReference type="HAMAP-Rule" id="MF_01351"/>
    </source>
</evidence>
<gene>
    <name evidence="1" type="primary">nuoI</name>
    <name type="ordered locus">YPTB2580</name>
</gene>
<dbReference type="EC" id="7.1.1.-" evidence="1"/>
<dbReference type="EMBL" id="BX936398">
    <property type="protein sequence ID" value="CAH21818.1"/>
    <property type="molecule type" value="Genomic_DNA"/>
</dbReference>
<dbReference type="RefSeq" id="WP_002210273.1">
    <property type="nucleotide sequence ID" value="NZ_CP009712.1"/>
</dbReference>
<dbReference type="SMR" id="Q669A7"/>
<dbReference type="GeneID" id="96666079"/>
<dbReference type="KEGG" id="ypo:BZ17_4058"/>
<dbReference type="KEGG" id="yps:YPTB2580"/>
<dbReference type="PATRIC" id="fig|273123.14.peg.4263"/>
<dbReference type="Proteomes" id="UP000001011">
    <property type="component" value="Chromosome"/>
</dbReference>
<dbReference type="GO" id="GO:0005886">
    <property type="term" value="C:plasma membrane"/>
    <property type="evidence" value="ECO:0007669"/>
    <property type="project" value="UniProtKB-SubCell"/>
</dbReference>
<dbReference type="GO" id="GO:0051539">
    <property type="term" value="F:4 iron, 4 sulfur cluster binding"/>
    <property type="evidence" value="ECO:0007669"/>
    <property type="project" value="UniProtKB-KW"/>
</dbReference>
<dbReference type="GO" id="GO:0005506">
    <property type="term" value="F:iron ion binding"/>
    <property type="evidence" value="ECO:0007669"/>
    <property type="project" value="UniProtKB-UniRule"/>
</dbReference>
<dbReference type="GO" id="GO:0050136">
    <property type="term" value="F:NADH:ubiquinone reductase (non-electrogenic) activity"/>
    <property type="evidence" value="ECO:0007669"/>
    <property type="project" value="UniProtKB-UniRule"/>
</dbReference>
<dbReference type="GO" id="GO:0048038">
    <property type="term" value="F:quinone binding"/>
    <property type="evidence" value="ECO:0007669"/>
    <property type="project" value="UniProtKB-KW"/>
</dbReference>
<dbReference type="GO" id="GO:0009060">
    <property type="term" value="P:aerobic respiration"/>
    <property type="evidence" value="ECO:0007669"/>
    <property type="project" value="TreeGrafter"/>
</dbReference>
<dbReference type="FunFam" id="3.30.70.3270:FF:000002">
    <property type="entry name" value="NADH-quinone oxidoreductase subunit I"/>
    <property type="match status" value="1"/>
</dbReference>
<dbReference type="Gene3D" id="3.30.70.3270">
    <property type="match status" value="1"/>
</dbReference>
<dbReference type="HAMAP" id="MF_01351">
    <property type="entry name" value="NDH1_NuoI"/>
    <property type="match status" value="1"/>
</dbReference>
<dbReference type="InterPro" id="IPR017896">
    <property type="entry name" value="4Fe4S_Fe-S-bd"/>
</dbReference>
<dbReference type="InterPro" id="IPR017900">
    <property type="entry name" value="4Fe4S_Fe_S_CS"/>
</dbReference>
<dbReference type="InterPro" id="IPR010226">
    <property type="entry name" value="NADH_quinone_OxRdtase_chainI"/>
</dbReference>
<dbReference type="NCBIfam" id="TIGR01971">
    <property type="entry name" value="NuoI"/>
    <property type="match status" value="1"/>
</dbReference>
<dbReference type="NCBIfam" id="NF004536">
    <property type="entry name" value="PRK05888.1-1"/>
    <property type="match status" value="1"/>
</dbReference>
<dbReference type="PANTHER" id="PTHR10849:SF20">
    <property type="entry name" value="NADH DEHYDROGENASE [UBIQUINONE] IRON-SULFUR PROTEIN 8, MITOCHONDRIAL"/>
    <property type="match status" value="1"/>
</dbReference>
<dbReference type="PANTHER" id="PTHR10849">
    <property type="entry name" value="NADH DEHYDROGENASE UBIQUINONE IRON-SULFUR PROTEIN 8, MITOCHONDRIAL"/>
    <property type="match status" value="1"/>
</dbReference>
<dbReference type="Pfam" id="PF12838">
    <property type="entry name" value="Fer4_7"/>
    <property type="match status" value="1"/>
</dbReference>
<dbReference type="SUPFAM" id="SSF54862">
    <property type="entry name" value="4Fe-4S ferredoxins"/>
    <property type="match status" value="1"/>
</dbReference>
<dbReference type="PROSITE" id="PS00198">
    <property type="entry name" value="4FE4S_FER_1"/>
    <property type="match status" value="2"/>
</dbReference>
<dbReference type="PROSITE" id="PS51379">
    <property type="entry name" value="4FE4S_FER_2"/>
    <property type="match status" value="2"/>
</dbReference>
<proteinExistence type="inferred from homology"/>
<reference key="1">
    <citation type="journal article" date="2004" name="Proc. Natl. Acad. Sci. U.S.A.">
        <title>Insights into the evolution of Yersinia pestis through whole-genome comparison with Yersinia pseudotuberculosis.</title>
        <authorList>
            <person name="Chain P.S.G."/>
            <person name="Carniel E."/>
            <person name="Larimer F.W."/>
            <person name="Lamerdin J."/>
            <person name="Stoutland P.O."/>
            <person name="Regala W.M."/>
            <person name="Georgescu A.M."/>
            <person name="Vergez L.M."/>
            <person name="Land M.L."/>
            <person name="Motin V.L."/>
            <person name="Brubaker R.R."/>
            <person name="Fowler J."/>
            <person name="Hinnebusch J."/>
            <person name="Marceau M."/>
            <person name="Medigue C."/>
            <person name="Simonet M."/>
            <person name="Chenal-Francisque V."/>
            <person name="Souza B."/>
            <person name="Dacheux D."/>
            <person name="Elliott J.M."/>
            <person name="Derbise A."/>
            <person name="Hauser L.J."/>
            <person name="Garcia E."/>
        </authorList>
    </citation>
    <scope>NUCLEOTIDE SEQUENCE [LARGE SCALE GENOMIC DNA]</scope>
    <source>
        <strain>IP32953</strain>
    </source>
</reference>
<name>NUOI_YERPS</name>
<organism>
    <name type="scientific">Yersinia pseudotuberculosis serotype I (strain IP32953)</name>
    <dbReference type="NCBI Taxonomy" id="273123"/>
    <lineage>
        <taxon>Bacteria</taxon>
        <taxon>Pseudomonadati</taxon>
        <taxon>Pseudomonadota</taxon>
        <taxon>Gammaproteobacteria</taxon>
        <taxon>Enterobacterales</taxon>
        <taxon>Yersiniaceae</taxon>
        <taxon>Yersinia</taxon>
    </lineage>
</organism>
<comment type="function">
    <text evidence="1">NDH-1 shuttles electrons from NADH, via FMN and iron-sulfur (Fe-S) centers, to quinones in the respiratory chain. The immediate electron acceptor for the enzyme in this species is believed to be ubiquinone. Couples the redox reaction to proton translocation (for every two electrons transferred, four hydrogen ions are translocated across the cytoplasmic membrane), and thus conserves the redox energy in a proton gradient.</text>
</comment>
<comment type="catalytic activity">
    <reaction evidence="1">
        <text>a quinone + NADH + 5 H(+)(in) = a quinol + NAD(+) + 4 H(+)(out)</text>
        <dbReference type="Rhea" id="RHEA:57888"/>
        <dbReference type="ChEBI" id="CHEBI:15378"/>
        <dbReference type="ChEBI" id="CHEBI:24646"/>
        <dbReference type="ChEBI" id="CHEBI:57540"/>
        <dbReference type="ChEBI" id="CHEBI:57945"/>
        <dbReference type="ChEBI" id="CHEBI:132124"/>
    </reaction>
</comment>
<comment type="cofactor">
    <cofactor evidence="1">
        <name>[4Fe-4S] cluster</name>
        <dbReference type="ChEBI" id="CHEBI:49883"/>
    </cofactor>
    <text evidence="1">Binds 2 [4Fe-4S] clusters per subunit.</text>
</comment>
<comment type="subunit">
    <text evidence="1">NDH-1 is composed of 13 different subunits. Subunits NuoA, H, J, K, L, M, N constitute the membrane sector of the complex.</text>
</comment>
<comment type="subcellular location">
    <subcellularLocation>
        <location evidence="1">Cell inner membrane</location>
        <topology evidence="1">Peripheral membrane protein</topology>
    </subcellularLocation>
</comment>
<comment type="similarity">
    <text evidence="1">Belongs to the complex I 23 kDa subunit family.</text>
</comment>
<keyword id="KW-0004">4Fe-4S</keyword>
<keyword id="KW-0997">Cell inner membrane</keyword>
<keyword id="KW-1003">Cell membrane</keyword>
<keyword id="KW-0408">Iron</keyword>
<keyword id="KW-0411">Iron-sulfur</keyword>
<keyword id="KW-0472">Membrane</keyword>
<keyword id="KW-0479">Metal-binding</keyword>
<keyword id="KW-0520">NAD</keyword>
<keyword id="KW-0874">Quinone</keyword>
<keyword id="KW-0677">Repeat</keyword>
<keyword id="KW-1278">Translocase</keyword>
<keyword id="KW-0830">Ubiquinone</keyword>